<evidence type="ECO:0000250" key="1">
    <source>
        <dbReference type="UniProtKB" id="B2G331"/>
    </source>
</evidence>
<evidence type="ECO:0000250" key="2">
    <source>
        <dbReference type="UniProtKB" id="P00974"/>
    </source>
</evidence>
<evidence type="ECO:0000250" key="3">
    <source>
        <dbReference type="UniProtKB" id="P31713"/>
    </source>
</evidence>
<evidence type="ECO:0000255" key="4">
    <source>
        <dbReference type="PROSITE-ProRule" id="PRU00031"/>
    </source>
</evidence>
<evidence type="ECO:0000269" key="5">
    <source>
    </source>
</evidence>
<evidence type="ECO:0000269" key="6">
    <source>
    </source>
</evidence>
<evidence type="ECO:0000269" key="7">
    <source ref="3"/>
</evidence>
<evidence type="ECO:0000303" key="8">
    <source ref="3"/>
</evidence>
<evidence type="ECO:0000305" key="9"/>
<sequence>GSICLEPKKVGRCRGSFPRFYFDSETGKCTPFIYGGCGGNGNNFETLHACRAICRA</sequence>
<keyword id="KW-1015">Disulfide bond</keyword>
<keyword id="KW-0872">Ion channel impairing toxin</keyword>
<keyword id="KW-0166">Nematocyst</keyword>
<keyword id="KW-0646">Protease inhibitor</keyword>
<keyword id="KW-0964">Secreted</keyword>
<keyword id="KW-0722">Serine protease inhibitor</keyword>
<keyword id="KW-0800">Toxin</keyword>
<dbReference type="SMR" id="P0DV04"/>
<dbReference type="GO" id="GO:0005615">
    <property type="term" value="C:extracellular space"/>
    <property type="evidence" value="ECO:0007669"/>
    <property type="project" value="TreeGrafter"/>
</dbReference>
<dbReference type="GO" id="GO:0042151">
    <property type="term" value="C:nematocyst"/>
    <property type="evidence" value="ECO:0007669"/>
    <property type="project" value="UniProtKB-SubCell"/>
</dbReference>
<dbReference type="GO" id="GO:0099106">
    <property type="term" value="F:ion channel regulator activity"/>
    <property type="evidence" value="ECO:0007669"/>
    <property type="project" value="UniProtKB-KW"/>
</dbReference>
<dbReference type="GO" id="GO:0004867">
    <property type="term" value="F:serine-type endopeptidase inhibitor activity"/>
    <property type="evidence" value="ECO:0007669"/>
    <property type="project" value="UniProtKB-KW"/>
</dbReference>
<dbReference type="GO" id="GO:0090729">
    <property type="term" value="F:toxin activity"/>
    <property type="evidence" value="ECO:0007669"/>
    <property type="project" value="UniProtKB-KW"/>
</dbReference>
<dbReference type="CDD" id="cd22618">
    <property type="entry name" value="Kunitz_SHPI"/>
    <property type="match status" value="1"/>
</dbReference>
<dbReference type="FunFam" id="4.10.410.10:FF:000021">
    <property type="entry name" value="Serine protease inhibitor, putative"/>
    <property type="match status" value="1"/>
</dbReference>
<dbReference type="Gene3D" id="4.10.410.10">
    <property type="entry name" value="Pancreatic trypsin inhibitor Kunitz domain"/>
    <property type="match status" value="1"/>
</dbReference>
<dbReference type="InterPro" id="IPR002223">
    <property type="entry name" value="Kunitz_BPTI"/>
</dbReference>
<dbReference type="InterPro" id="IPR036880">
    <property type="entry name" value="Kunitz_BPTI_sf"/>
</dbReference>
<dbReference type="InterPro" id="IPR020901">
    <property type="entry name" value="Prtase_inh_Kunz-CS"/>
</dbReference>
<dbReference type="InterPro" id="IPR050098">
    <property type="entry name" value="TFPI/VKTCI-like"/>
</dbReference>
<dbReference type="PANTHER" id="PTHR10083:SF374">
    <property type="entry name" value="BPTI_KUNITZ INHIBITOR DOMAIN-CONTAINING PROTEIN"/>
    <property type="match status" value="1"/>
</dbReference>
<dbReference type="PANTHER" id="PTHR10083">
    <property type="entry name" value="KUNITZ-TYPE PROTEASE INHIBITOR-RELATED"/>
    <property type="match status" value="1"/>
</dbReference>
<dbReference type="Pfam" id="PF00014">
    <property type="entry name" value="Kunitz_BPTI"/>
    <property type="match status" value="1"/>
</dbReference>
<dbReference type="PRINTS" id="PR00759">
    <property type="entry name" value="BASICPTASE"/>
</dbReference>
<dbReference type="SMART" id="SM00131">
    <property type="entry name" value="KU"/>
    <property type="match status" value="1"/>
</dbReference>
<dbReference type="SUPFAM" id="SSF57362">
    <property type="entry name" value="BPTI-like"/>
    <property type="match status" value="1"/>
</dbReference>
<dbReference type="PROSITE" id="PS00280">
    <property type="entry name" value="BPTI_KUNITZ_1"/>
    <property type="match status" value="1"/>
</dbReference>
<dbReference type="PROSITE" id="PS50279">
    <property type="entry name" value="BPTI_KUNITZ_2"/>
    <property type="match status" value="1"/>
</dbReference>
<organism>
    <name type="scientific">Radianthus crispa</name>
    <name type="common">Leathery sea anemone</name>
    <name type="synonym">Heteractis crispa</name>
    <dbReference type="NCBI Taxonomy" id="3122430"/>
    <lineage>
        <taxon>Eukaryota</taxon>
        <taxon>Metazoa</taxon>
        <taxon>Cnidaria</taxon>
        <taxon>Anthozoa</taxon>
        <taxon>Hexacorallia</taxon>
        <taxon>Actiniaria</taxon>
        <taxon>Stichodactylidae</taxon>
        <taxon>Radianthus</taxon>
    </lineage>
</organism>
<accession>P0DV04</accession>
<name>VKT2N_RADCR</name>
<reference key="1">
    <citation type="journal article" date="2012" name="Peptides">
        <title>A new multigene superfamily of Kunitz-type protease inhibitors from sea anemone Heteractis crispa.</title>
        <authorList>
            <person name="Isaeva M.P."/>
            <person name="Chausova V.E."/>
            <person name="Zelepuga E.A."/>
            <person name="Guzev K.V."/>
            <person name="Tabakmakher V.M."/>
            <person name="Monastyrnaya M.M."/>
            <person name="Kozlovskaya E.P."/>
        </authorList>
    </citation>
    <scope>NUCLEOTIDE SEQUENCE [MRNA]</scope>
    <scope>3D-STRUCTURE MODELING</scope>
</reference>
<reference key="2">
    <citation type="journal article" date="2015" name="Dokl. Biochem. Biophys.">
        <title>Analgesic effect of novel Kunitz-type polypeptides of the sea anemone Heteractis crispa.</title>
        <authorList>
            <person name="Tabakmakher V.M."/>
            <person name="Sintsova O.V."/>
            <person name="Krivoshapko O.N."/>
            <person name="Zelepuga E.A."/>
            <person name="Monastyrnaya M.M."/>
            <person name="Kozlovskaya E.P."/>
        </authorList>
    </citation>
    <scope>FUNCTION</scope>
</reference>
<reference key="3">
    <citation type="journal article" date="2017" name="Russ. J. Bioorg. Chem.">
        <title>Kunitz-type peptides of the sea anemone Heteractis crispa: potential anti-inflammatory compounds.</title>
        <authorList>
            <person name="Sintsovaa O.V."/>
            <person name="Pislyagina E.A."/>
            <person name="Gladkikha I.N."/>
            <person name="Monastyrnayaa M.M."/>
            <person name="Menchinskayaa E.S."/>
            <person name="Leychenkoa E.V."/>
            <person name="Aminina D.L."/>
            <person name="Kozlovskaya E.P."/>
        </authorList>
    </citation>
    <scope>FUNCTION</scope>
    <scope>RECOMBINANT EXPRESSION</scope>
</reference>
<reference key="4">
    <citation type="journal article" date="2021" name="Biomedicines">
        <title>Sea anemone kunitz-type peptides demonstrate neuroprotective activity in the 6-hydroxydopamine induced neurotoxicity model.</title>
        <authorList>
            <person name="Sintsova O."/>
            <person name="Gladkikh I."/>
            <person name="Monastyrnaya M."/>
            <person name="Tabakmakher V."/>
            <person name="Yurchenko E."/>
            <person name="Menchinskaya E."/>
            <person name="Pislyagin E."/>
            <person name="Andreev Y."/>
            <person name="Kozlov S."/>
            <person name="Peigneur S."/>
            <person name="Tytgat J."/>
            <person name="Aminin D."/>
            <person name="Kozlovskaya E."/>
            <person name="Leychenko E."/>
        </authorList>
    </citation>
    <scope>FUNCTION</scope>
    <scope>RECOMBINANT EXPRESSION</scope>
</reference>
<protein>
    <recommendedName>
        <fullName evidence="9">PI-stichotoxin-Hcr2n</fullName>
        <shortName evidence="9">PI-SHTX-Hcr2n</shortName>
    </recommendedName>
    <alternativeName>
        <fullName evidence="8">Kunitz-type serine protease inhibitor HCGS1.19</fullName>
    </alternativeName>
</protein>
<proteinExistence type="inferred from homology"/>
<feature type="chain" id="PRO_0000454105" description="PI-stichotoxin-Hcr2n" evidence="9">
    <location>
        <begin position="1"/>
        <end position="56"/>
    </location>
</feature>
<feature type="domain" description="BPTI/Kunitz inhibitor" evidence="4">
    <location>
        <begin position="4"/>
        <end position="54"/>
    </location>
</feature>
<feature type="site" description="Reactive bond for trypsin" evidence="2">
    <location>
        <begin position="14"/>
        <end position="15"/>
    </location>
</feature>
<feature type="disulfide bond" evidence="3">
    <location>
        <begin position="4"/>
        <end position="54"/>
    </location>
</feature>
<feature type="disulfide bond" evidence="3">
    <location>
        <begin position="13"/>
        <end position="37"/>
    </location>
</feature>
<feature type="disulfide bond" evidence="3">
    <location>
        <begin position="29"/>
        <end position="50"/>
    </location>
</feature>
<comment type="function">
    <text evidence="1 5 6 7">This recombinant serine protease inhibitor inhibits trypsin (Ki=30 nM) (Ref.3). It possesses anti-inflammatory activity in vitro (Ref.3). It blocks histamine influence on intracellular calcium concentration in murine bone marrow-derived macrophages (62.2% inhibition at 10 uM), which can indicate inhibition of H1-histamine receptor (HRH1) (Ref.3). In contrast to some paralogs, this protein decreases reactive oxygen species (ROS) level in the oxidative stress agent 6-hydroxydopamine (6-OHDA)-induced neurotoxicity model, but does not show cytoprotective activity on neuroblastoma cells (PubMed:33802055). In vivo, it shows analgesic activity, since it increases hot plate and tail flick withdrawal latencies, when using a mice thermal pain stimulation model (PubMed:25937220).</text>
</comment>
<comment type="subcellular location">
    <subcellularLocation>
        <location evidence="9">Secreted</location>
    </subcellularLocation>
    <subcellularLocation>
        <location evidence="9">Nematocyst</location>
    </subcellularLocation>
</comment>
<comment type="miscellaneous">
    <text evidence="6">Negative results: has no activity on Kv1.1/KCNA1, Kv1.2/KCNA2, Kv1.3/KCNA3, Kv1.4/KCNA4, Kv1.5/KCNA5, Kv1.6/KCNA6, Shaker, Kv11.1/KCNH2/ERG1 potassium channels and on TRPV1, the capsaicin receptors.</text>
</comment>
<comment type="miscellaneous">
    <text evidence="9">A synonymy between H.magnifica and R.crispa is controversial.</text>
</comment>
<comment type="similarity">
    <text evidence="9">Belongs to the venom Kunitz-type family. Sea anemone type 2 potassium channel toxin subfamily.</text>
</comment>